<comment type="function">
    <text evidence="1">Component of the PAN1 actin cytoskeleton-regulatory complex required for the internalization of endosomes during actin-coupled endocytosis. The complex links the site of endocytosis to the cell membrane-associated actin cytoskeleton. Mediates uptake of external molecules and vacuolar degradation of plasma membrane proteins. Plays a role in the proper organization of the cell membrane-associated actin cytoskeleton and promotes its destabilization (By similarity).</text>
</comment>
<comment type="subunit">
    <text evidence="1">Component of the PAN1 actin cytoskeleton-regulatory complex.</text>
</comment>
<comment type="subcellular location">
    <subcellularLocation>
        <location evidence="1">Cell membrane</location>
        <topology evidence="1">Peripheral membrane protein</topology>
        <orientation evidence="1">Cytoplasmic side</orientation>
    </subcellularLocation>
    <subcellularLocation>
        <location evidence="1">Endosome membrane</location>
        <topology evidence="1">Peripheral membrane protein</topology>
        <orientation evidence="1">Cytoplasmic side</orientation>
    </subcellularLocation>
    <subcellularLocation>
        <location evidence="1">Cytoplasm</location>
        <location evidence="1">Cytoskeleton</location>
        <location evidence="1">Actin patch</location>
    </subcellularLocation>
    <text evidence="1">Cytoplasmic and cortical actin patches.</text>
</comment>
<comment type="similarity">
    <text evidence="4">Belongs to the SLA1 family.</text>
</comment>
<comment type="sequence caution" evidence="4">
    <conflict type="erroneous gene model prediction">
        <sequence resource="EMBL-CDS" id="EDN96618"/>
    </conflict>
</comment>
<protein>
    <recommendedName>
        <fullName>Actin cytoskeleton-regulatory complex protein sla1</fullName>
    </recommendedName>
</protein>
<proteinExistence type="inferred from homology"/>
<sequence>MGFLGVYSAVYDYVPAGEGELTIKEGDILYVLEKSTEDDWWKAKKKASAEDEDEPVGLIPNNYIQEAAPSGKARALYDYTRQTDEELSFTEDAQLEVFDTSDPDWILVGFEGEYGFVPANYIELSEEEQHKEAPAPSLPSRPRPASVPVEEEAPAAPQSPLSPQPAETPVATPAAAIAGILKQRQASAPAARAPPEFTPEASDEEPPTPTLPARPVSQVSVPQPTRGQEHDREREPARRYSPRLPASPVVTASPPHNRVSFSTMGVVNDVDEHKAARAPGGFHMYNISEMVHVMGKKKKMPTTLGINIATGTILIAPEQARDGPEQTWTAEKMTHYSLEGKHVFMELVRPSKSIDFHAGAKDTATEIVSALGELAGAARAEGLREVIAAGSGSGQKRGQVLYDFVAQGDDEVDVNVGDEVVIIDDVKSEEWWMVRRVKNAKEGVVPSSYIEIMGAIQSASSAGINAGRSTVEQNRLEEARLAREALKTAKKDEVEVGPGMRLPERGSSLFARDNGNQSGEQKRRESVRESGQSRSSKSKPDPAKVRTWTDRSKSFSVEAQFLALKDGKINLHKMNGVKIAVPVVKMSVEDLEYVERMTGISLDEDKPLSDIKKQQKSRAAERDSSNGASPAPGPSASMGAGASIQTPEYDWFQFFLSCDVNVGLCERYAQAFKRDSMDESVLPDIDATVLRNLGIREGDIIKIIRFLDKKYMRKDGKRNVSFGGEDEGEAGLFSGPGGALKNNTRKGRPAPAVQTNDVVDANAFSQNGTEKSSPQGVATPLANAPTPAEKDVKREGFDDDAWDVKPSKQETTSSPPAQSIPAAAPQQPVITGSMQELSLLSTPLEPVKAQPTAQASPQPQAPPAVTPSIFAGIGNQQTGVPQPQPLPSGPLLPANLARQRPAPPQMTANSTLIPPLPPSRPLSAPQAASAYAPPPLQAQATGYGAFQPQIAPPGQSLHDLNQQRMQQQQQQQMQQQQFMLQQQQQAGMMQQPTGFNQFNPGVPNNFQQFPMQTGNPQQPFIPNQTGTPFANPPAQPFQPQPLQAQPTGFQSAFPPGQQYPQPTGVNSYLPPALQPQPTGMMNGANGFNQNFTPPPIPPMPQQQPAPMLPQATGPAPPVRFGVNGTNNIAPQPTGRRANLAQATPQNPFGF</sequence>
<reference key="1">
    <citation type="journal article" date="2011" name="PLoS Genet.">
        <title>Genomic analysis of the necrotrophic fungal pathogens Sclerotinia sclerotiorum and Botrytis cinerea.</title>
        <authorList>
            <person name="Amselem J."/>
            <person name="Cuomo C.A."/>
            <person name="van Kan J.A.L."/>
            <person name="Viaud M."/>
            <person name="Benito E.P."/>
            <person name="Couloux A."/>
            <person name="Coutinho P.M."/>
            <person name="de Vries R.P."/>
            <person name="Dyer P.S."/>
            <person name="Fillinger S."/>
            <person name="Fournier E."/>
            <person name="Gout L."/>
            <person name="Hahn M."/>
            <person name="Kohn L."/>
            <person name="Lapalu N."/>
            <person name="Plummer K.M."/>
            <person name="Pradier J.-M."/>
            <person name="Quevillon E."/>
            <person name="Sharon A."/>
            <person name="Simon A."/>
            <person name="ten Have A."/>
            <person name="Tudzynski B."/>
            <person name="Tudzynski P."/>
            <person name="Wincker P."/>
            <person name="Andrew M."/>
            <person name="Anthouard V."/>
            <person name="Beever R.E."/>
            <person name="Beffa R."/>
            <person name="Benoit I."/>
            <person name="Bouzid O."/>
            <person name="Brault B."/>
            <person name="Chen Z."/>
            <person name="Choquer M."/>
            <person name="Collemare J."/>
            <person name="Cotton P."/>
            <person name="Danchin E.G."/>
            <person name="Da Silva C."/>
            <person name="Gautier A."/>
            <person name="Giraud C."/>
            <person name="Giraud T."/>
            <person name="Gonzalez C."/>
            <person name="Grossetete S."/>
            <person name="Gueldener U."/>
            <person name="Henrissat B."/>
            <person name="Howlett B.J."/>
            <person name="Kodira C."/>
            <person name="Kretschmer M."/>
            <person name="Lappartient A."/>
            <person name="Leroch M."/>
            <person name="Levis C."/>
            <person name="Mauceli E."/>
            <person name="Neuveglise C."/>
            <person name="Oeser B."/>
            <person name="Pearson M."/>
            <person name="Poulain J."/>
            <person name="Poussereau N."/>
            <person name="Quesneville H."/>
            <person name="Rascle C."/>
            <person name="Schumacher J."/>
            <person name="Segurens B."/>
            <person name="Sexton A."/>
            <person name="Silva E."/>
            <person name="Sirven C."/>
            <person name="Soanes D.M."/>
            <person name="Talbot N.J."/>
            <person name="Templeton M."/>
            <person name="Yandava C."/>
            <person name="Yarden O."/>
            <person name="Zeng Q."/>
            <person name="Rollins J.A."/>
            <person name="Lebrun M.-H."/>
            <person name="Dickman M."/>
        </authorList>
    </citation>
    <scope>NUCLEOTIDE SEQUENCE [LARGE SCALE GENOMIC DNA]</scope>
    <source>
        <strain>ATCC 18683 / 1980 / Ss-1</strain>
    </source>
</reference>
<evidence type="ECO:0000250" key="1"/>
<evidence type="ECO:0000255" key="2">
    <source>
        <dbReference type="PROSITE-ProRule" id="PRU00192"/>
    </source>
</evidence>
<evidence type="ECO:0000256" key="3">
    <source>
        <dbReference type="SAM" id="MobiDB-lite"/>
    </source>
</evidence>
<evidence type="ECO:0000305" key="4"/>
<keyword id="KW-0009">Actin-binding</keyword>
<keyword id="KW-1003">Cell membrane</keyword>
<keyword id="KW-0963">Cytoplasm</keyword>
<keyword id="KW-0206">Cytoskeleton</keyword>
<keyword id="KW-0254">Endocytosis</keyword>
<keyword id="KW-0967">Endosome</keyword>
<keyword id="KW-0472">Membrane</keyword>
<keyword id="KW-1185">Reference proteome</keyword>
<keyword id="KW-0677">Repeat</keyword>
<keyword id="KW-0728">SH3 domain</keyword>
<gene>
    <name type="primary">sla1</name>
    <name type="ORF">SS1G_01544</name>
</gene>
<feature type="chain" id="PRO_0000349489" description="Actin cytoskeleton-regulatory complex protein sla1">
    <location>
        <begin position="1"/>
        <end position="1150"/>
    </location>
</feature>
<feature type="domain" description="SH3 1" evidence="2">
    <location>
        <begin position="2"/>
        <end position="69"/>
    </location>
</feature>
<feature type="domain" description="SH3 2" evidence="2">
    <location>
        <begin position="70"/>
        <end position="127"/>
    </location>
</feature>
<feature type="domain" description="SH3 3" evidence="2">
    <location>
        <begin position="393"/>
        <end position="455"/>
    </location>
</feature>
<feature type="region of interest" description="Disordered" evidence="3">
    <location>
        <begin position="127"/>
        <end position="170"/>
    </location>
</feature>
<feature type="region of interest" description="Disordered" evidence="3">
    <location>
        <begin position="183"/>
        <end position="257"/>
    </location>
</feature>
<feature type="region of interest" description="Disordered" evidence="3">
    <location>
        <begin position="490"/>
        <end position="547"/>
    </location>
</feature>
<feature type="region of interest" description="Disordered" evidence="3">
    <location>
        <begin position="605"/>
        <end position="640"/>
    </location>
</feature>
<feature type="region of interest" description="Disordered" evidence="3">
    <location>
        <begin position="722"/>
        <end position="827"/>
    </location>
</feature>
<feature type="region of interest" description="Disordered" evidence="3">
    <location>
        <begin position="846"/>
        <end position="930"/>
    </location>
</feature>
<feature type="region of interest" description="Disordered" evidence="3">
    <location>
        <begin position="1026"/>
        <end position="1060"/>
    </location>
</feature>
<feature type="region of interest" description="Disordered" evidence="3">
    <location>
        <begin position="1101"/>
        <end position="1150"/>
    </location>
</feature>
<feature type="compositionally biased region" description="Low complexity" evidence="3">
    <location>
        <begin position="143"/>
        <end position="170"/>
    </location>
</feature>
<feature type="compositionally biased region" description="Low complexity" evidence="3">
    <location>
        <begin position="183"/>
        <end position="195"/>
    </location>
</feature>
<feature type="compositionally biased region" description="Polar residues" evidence="3">
    <location>
        <begin position="217"/>
        <end position="226"/>
    </location>
</feature>
<feature type="compositionally biased region" description="Basic and acidic residues" evidence="3">
    <location>
        <begin position="227"/>
        <end position="238"/>
    </location>
</feature>
<feature type="compositionally biased region" description="Basic and acidic residues" evidence="3">
    <location>
        <begin position="538"/>
        <end position="547"/>
    </location>
</feature>
<feature type="compositionally biased region" description="Basic and acidic residues" evidence="3">
    <location>
        <begin position="605"/>
        <end position="624"/>
    </location>
</feature>
<feature type="compositionally biased region" description="Low complexity" evidence="3">
    <location>
        <begin position="625"/>
        <end position="640"/>
    </location>
</feature>
<feature type="compositionally biased region" description="Polar residues" evidence="3">
    <location>
        <begin position="753"/>
        <end position="776"/>
    </location>
</feature>
<feature type="compositionally biased region" description="Basic and acidic residues" evidence="3">
    <location>
        <begin position="788"/>
        <end position="808"/>
    </location>
</feature>
<feature type="compositionally biased region" description="Low complexity" evidence="3">
    <location>
        <begin position="813"/>
        <end position="827"/>
    </location>
</feature>
<feature type="compositionally biased region" description="Low complexity" evidence="3">
    <location>
        <begin position="849"/>
        <end position="858"/>
    </location>
</feature>
<feature type="compositionally biased region" description="Low complexity" evidence="3">
    <location>
        <begin position="921"/>
        <end position="930"/>
    </location>
</feature>
<feature type="compositionally biased region" description="Pro residues" evidence="3">
    <location>
        <begin position="1030"/>
        <end position="1039"/>
    </location>
</feature>
<feature type="compositionally biased region" description="Polar residues" evidence="3">
    <location>
        <begin position="1140"/>
        <end position="1150"/>
    </location>
</feature>
<organism>
    <name type="scientific">Sclerotinia sclerotiorum (strain ATCC 18683 / 1980 / Ss-1)</name>
    <name type="common">White mold</name>
    <name type="synonym">Whetzelinia sclerotiorum</name>
    <dbReference type="NCBI Taxonomy" id="665079"/>
    <lineage>
        <taxon>Eukaryota</taxon>
        <taxon>Fungi</taxon>
        <taxon>Dikarya</taxon>
        <taxon>Ascomycota</taxon>
        <taxon>Pezizomycotina</taxon>
        <taxon>Leotiomycetes</taxon>
        <taxon>Helotiales</taxon>
        <taxon>Sclerotiniaceae</taxon>
        <taxon>Sclerotinia</taxon>
    </lineage>
</organism>
<accession>A7E8B6</accession>
<dbReference type="EMBL" id="CH476622">
    <property type="protein sequence ID" value="EDN96618.1"/>
    <property type="status" value="ALT_SEQ"/>
    <property type="molecule type" value="Genomic_DNA"/>
</dbReference>
<dbReference type="RefSeq" id="XP_001597350.1">
    <property type="nucleotide sequence ID" value="XM_001597300.1"/>
</dbReference>
<dbReference type="SMR" id="A7E8B6"/>
<dbReference type="FunCoup" id="A7E8B6">
    <property type="interactions" value="132"/>
</dbReference>
<dbReference type="STRING" id="665079.A7E8B6"/>
<dbReference type="GeneID" id="5493263"/>
<dbReference type="KEGG" id="ssl:SS1G_01544"/>
<dbReference type="eggNOG" id="ENOG502QQC3">
    <property type="taxonomic scope" value="Eukaryota"/>
</dbReference>
<dbReference type="InParanoid" id="A7E8B6"/>
<dbReference type="Proteomes" id="UP000001312">
    <property type="component" value="Unassembled WGS sequence"/>
</dbReference>
<dbReference type="GO" id="GO:0030479">
    <property type="term" value="C:actin cortical patch"/>
    <property type="evidence" value="ECO:0007669"/>
    <property type="project" value="UniProtKB-SubCell"/>
</dbReference>
<dbReference type="GO" id="GO:0010008">
    <property type="term" value="C:endosome membrane"/>
    <property type="evidence" value="ECO:0007669"/>
    <property type="project" value="UniProtKB-SubCell"/>
</dbReference>
<dbReference type="GO" id="GO:0005634">
    <property type="term" value="C:nucleus"/>
    <property type="evidence" value="ECO:0000318"/>
    <property type="project" value="GO_Central"/>
</dbReference>
<dbReference type="GO" id="GO:0005886">
    <property type="term" value="C:plasma membrane"/>
    <property type="evidence" value="ECO:0007669"/>
    <property type="project" value="UniProtKB-SubCell"/>
</dbReference>
<dbReference type="GO" id="GO:0003779">
    <property type="term" value="F:actin binding"/>
    <property type="evidence" value="ECO:0007669"/>
    <property type="project" value="UniProtKB-KW"/>
</dbReference>
<dbReference type="GO" id="GO:0042802">
    <property type="term" value="F:identical protein binding"/>
    <property type="evidence" value="ECO:0007669"/>
    <property type="project" value="InterPro"/>
</dbReference>
<dbReference type="GO" id="GO:0030674">
    <property type="term" value="F:protein-macromolecule adaptor activity"/>
    <property type="evidence" value="ECO:0007669"/>
    <property type="project" value="InterPro"/>
</dbReference>
<dbReference type="GO" id="GO:0043130">
    <property type="term" value="F:ubiquitin binding"/>
    <property type="evidence" value="ECO:0007669"/>
    <property type="project" value="InterPro"/>
</dbReference>
<dbReference type="GO" id="GO:0000147">
    <property type="term" value="P:actin cortical patch assembly"/>
    <property type="evidence" value="ECO:0000318"/>
    <property type="project" value="GO_Central"/>
</dbReference>
<dbReference type="GO" id="GO:0006897">
    <property type="term" value="P:endocytosis"/>
    <property type="evidence" value="ECO:0007669"/>
    <property type="project" value="UniProtKB-KW"/>
</dbReference>
<dbReference type="GO" id="GO:0030833">
    <property type="term" value="P:regulation of actin filament polymerization"/>
    <property type="evidence" value="ECO:0000318"/>
    <property type="project" value="GO_Central"/>
</dbReference>
<dbReference type="CDD" id="cd09532">
    <property type="entry name" value="SAM_SLA1_fungal"/>
    <property type="match status" value="1"/>
</dbReference>
<dbReference type="CDD" id="cd11773">
    <property type="entry name" value="SH3_Sla1p_1"/>
    <property type="match status" value="1"/>
</dbReference>
<dbReference type="CDD" id="cd11774">
    <property type="entry name" value="SH3_Sla1p_2"/>
    <property type="match status" value="1"/>
</dbReference>
<dbReference type="CDD" id="cd11775">
    <property type="entry name" value="SH3_Sla1p_3"/>
    <property type="match status" value="1"/>
</dbReference>
<dbReference type="Gene3D" id="2.30.30.40">
    <property type="entry name" value="SH3 Domains"/>
    <property type="match status" value="3"/>
</dbReference>
<dbReference type="Gene3D" id="2.30.30.700">
    <property type="entry name" value="SLA1 homology domain 1"/>
    <property type="match status" value="1"/>
</dbReference>
<dbReference type="Gene3D" id="1.10.150.50">
    <property type="entry name" value="Transcription Factor, Ets-1"/>
    <property type="match status" value="1"/>
</dbReference>
<dbReference type="InterPro" id="IPR013182">
    <property type="entry name" value="DUF1720"/>
</dbReference>
<dbReference type="InterPro" id="IPR056996">
    <property type="entry name" value="PH_SLA1"/>
</dbReference>
<dbReference type="InterPro" id="IPR013761">
    <property type="entry name" value="SAM/pointed_sf"/>
</dbReference>
<dbReference type="InterPro" id="IPR036028">
    <property type="entry name" value="SH3-like_dom_sf"/>
</dbReference>
<dbReference type="InterPro" id="IPR001452">
    <property type="entry name" value="SH3_domain"/>
</dbReference>
<dbReference type="InterPro" id="IPR007131">
    <property type="entry name" value="SHD1"/>
</dbReference>
<dbReference type="InterPro" id="IPR035800">
    <property type="entry name" value="Sla1_SH3_1"/>
</dbReference>
<dbReference type="InterPro" id="IPR035821">
    <property type="entry name" value="Sla1_SH3_3"/>
</dbReference>
<dbReference type="PANTHER" id="PTHR15735:SF19">
    <property type="entry name" value="ACTIN CYTOSKELETON-REGULATORY COMPLEX PROTEIN SLA1"/>
    <property type="match status" value="1"/>
</dbReference>
<dbReference type="PANTHER" id="PTHR15735">
    <property type="entry name" value="FCH AND DOUBLE SH3 DOMAINS PROTEIN"/>
    <property type="match status" value="1"/>
</dbReference>
<dbReference type="Pfam" id="PF08226">
    <property type="entry name" value="DUF1720"/>
    <property type="match status" value="1"/>
</dbReference>
<dbReference type="Pfam" id="PF24081">
    <property type="entry name" value="PH_SLA1"/>
    <property type="match status" value="1"/>
</dbReference>
<dbReference type="Pfam" id="PF18017">
    <property type="entry name" value="SAM_4"/>
    <property type="match status" value="1"/>
</dbReference>
<dbReference type="Pfam" id="PF00018">
    <property type="entry name" value="SH3_1"/>
    <property type="match status" value="2"/>
</dbReference>
<dbReference type="Pfam" id="PF14604">
    <property type="entry name" value="SH3_9"/>
    <property type="match status" value="1"/>
</dbReference>
<dbReference type="Pfam" id="PF03983">
    <property type="entry name" value="SHD1"/>
    <property type="match status" value="1"/>
</dbReference>
<dbReference type="PRINTS" id="PR00452">
    <property type="entry name" value="SH3DOMAIN"/>
</dbReference>
<dbReference type="SMART" id="SM00326">
    <property type="entry name" value="SH3"/>
    <property type="match status" value="3"/>
</dbReference>
<dbReference type="SUPFAM" id="SSF50044">
    <property type="entry name" value="SH3-domain"/>
    <property type="match status" value="3"/>
</dbReference>
<dbReference type="PROSITE" id="PS50002">
    <property type="entry name" value="SH3"/>
    <property type="match status" value="3"/>
</dbReference>
<name>SLA1_SCLS1</name>